<comment type="function">
    <text evidence="1">NDH shuttles electrons from NAD(P)H:plastoquinone, via FMN and iron-sulfur (Fe-S) centers, to quinones in the photosynthetic chain and possibly in a chloroplast respiratory chain. The immediate electron acceptor for the enzyme in this species is believed to be plastoquinone. Couples the redox reaction to proton translocation, and thus conserves the redox energy in a proton gradient.</text>
</comment>
<comment type="catalytic activity">
    <reaction evidence="1">
        <text>a plastoquinone + NADH + (n+1) H(+)(in) = a plastoquinol + NAD(+) + n H(+)(out)</text>
        <dbReference type="Rhea" id="RHEA:42608"/>
        <dbReference type="Rhea" id="RHEA-COMP:9561"/>
        <dbReference type="Rhea" id="RHEA-COMP:9562"/>
        <dbReference type="ChEBI" id="CHEBI:15378"/>
        <dbReference type="ChEBI" id="CHEBI:17757"/>
        <dbReference type="ChEBI" id="CHEBI:57540"/>
        <dbReference type="ChEBI" id="CHEBI:57945"/>
        <dbReference type="ChEBI" id="CHEBI:62192"/>
    </reaction>
</comment>
<comment type="catalytic activity">
    <reaction evidence="1">
        <text>a plastoquinone + NADPH + (n+1) H(+)(in) = a plastoquinol + NADP(+) + n H(+)(out)</text>
        <dbReference type="Rhea" id="RHEA:42612"/>
        <dbReference type="Rhea" id="RHEA-COMP:9561"/>
        <dbReference type="Rhea" id="RHEA-COMP:9562"/>
        <dbReference type="ChEBI" id="CHEBI:15378"/>
        <dbReference type="ChEBI" id="CHEBI:17757"/>
        <dbReference type="ChEBI" id="CHEBI:57783"/>
        <dbReference type="ChEBI" id="CHEBI:58349"/>
        <dbReference type="ChEBI" id="CHEBI:62192"/>
    </reaction>
</comment>
<comment type="subunit">
    <text evidence="1">NDH is composed of at least 16 different subunits, 5 of which are encoded in the nucleus.</text>
</comment>
<comment type="subcellular location">
    <subcellularLocation>
        <location evidence="1">Plastid</location>
        <location evidence="1">Chloroplast thylakoid membrane</location>
        <topology evidence="1">Multi-pass membrane protein</topology>
    </subcellularLocation>
</comment>
<comment type="similarity">
    <text evidence="1">Belongs to the complex I subunit 3 family.</text>
</comment>
<keyword id="KW-0150">Chloroplast</keyword>
<keyword id="KW-0472">Membrane</keyword>
<keyword id="KW-0520">NAD</keyword>
<keyword id="KW-0521">NADP</keyword>
<keyword id="KW-0934">Plastid</keyword>
<keyword id="KW-0618">Plastoquinone</keyword>
<keyword id="KW-0874">Quinone</keyword>
<keyword id="KW-0793">Thylakoid</keyword>
<keyword id="KW-1278">Translocase</keyword>
<keyword id="KW-0812">Transmembrane</keyword>
<keyword id="KW-1133">Transmembrane helix</keyword>
<keyword id="KW-0813">Transport</keyword>
<accession>P0C320</accession>
<accession>P12126</accession>
<accession>Q6QY70</accession>
<accession>Q7G225</accession>
<reference key="1">
    <citation type="journal article" date="2004" name="Plant Physiol.">
        <title>A comparison of rice chloroplast genomes.</title>
        <authorList>
            <person name="Tang J."/>
            <person name="Xia H."/>
            <person name="Cao M."/>
            <person name="Zhang X."/>
            <person name="Zeng W."/>
            <person name="Hu S."/>
            <person name="Tong W."/>
            <person name="Wang J."/>
            <person name="Wang J."/>
            <person name="Yu J."/>
            <person name="Yang H."/>
            <person name="Zhu L."/>
        </authorList>
    </citation>
    <scope>NUCLEOTIDE SEQUENCE [LARGE SCALE GENOMIC DNA]</scope>
    <source>
        <strain>cv. PA64s</strain>
    </source>
</reference>
<geneLocation type="chloroplast"/>
<protein>
    <recommendedName>
        <fullName evidence="1">NAD(P)H-quinone oxidoreductase subunit 3, chloroplastic</fullName>
        <ecNumber evidence="1">7.1.1.-</ecNumber>
    </recommendedName>
    <alternativeName>
        <fullName evidence="1">NAD(P)H dehydrogenase subunit 3</fullName>
    </alternativeName>
    <alternativeName>
        <fullName evidence="1">NADH-plastoquinone oxidoreductase subunit 3</fullName>
    </alternativeName>
</protein>
<proteinExistence type="inferred from homology"/>
<gene>
    <name evidence="1" type="primary">ndhC</name>
    <name type="ORF">PA059</name>
</gene>
<organism>
    <name type="scientific">Oryza sativa</name>
    <name type="common">Rice</name>
    <dbReference type="NCBI Taxonomy" id="4530"/>
    <lineage>
        <taxon>Eukaryota</taxon>
        <taxon>Viridiplantae</taxon>
        <taxon>Streptophyta</taxon>
        <taxon>Embryophyta</taxon>
        <taxon>Tracheophyta</taxon>
        <taxon>Spermatophyta</taxon>
        <taxon>Magnoliopsida</taxon>
        <taxon>Liliopsida</taxon>
        <taxon>Poales</taxon>
        <taxon>Poaceae</taxon>
        <taxon>BOP clade</taxon>
        <taxon>Oryzoideae</taxon>
        <taxon>Oryzeae</taxon>
        <taxon>Oryzinae</taxon>
        <taxon>Oryza</taxon>
    </lineage>
</organism>
<name>NU3C_ORYSA</name>
<feature type="chain" id="PRO_0000117853" description="NAD(P)H-quinone oxidoreductase subunit 3, chloroplastic">
    <location>
        <begin position="1"/>
        <end position="120"/>
    </location>
</feature>
<feature type="transmembrane region" description="Helical" evidence="1">
    <location>
        <begin position="9"/>
        <end position="29"/>
    </location>
</feature>
<feature type="transmembrane region" description="Helical" evidence="1">
    <location>
        <begin position="64"/>
        <end position="84"/>
    </location>
</feature>
<feature type="transmembrane region" description="Helical" evidence="1">
    <location>
        <begin position="88"/>
        <end position="108"/>
    </location>
</feature>
<dbReference type="EC" id="7.1.1.-" evidence="1"/>
<dbReference type="EMBL" id="AY522331">
    <property type="protein sequence ID" value="AAS46188.1"/>
    <property type="molecule type" value="Genomic_DNA"/>
</dbReference>
<dbReference type="RefSeq" id="NP_039388.1">
    <property type="nucleotide sequence ID" value="NC_001320.1"/>
</dbReference>
<dbReference type="RefSeq" id="YP_009305309.1">
    <property type="nucleotide sequence ID" value="NC_031333.1"/>
</dbReference>
<dbReference type="SMR" id="P0C320"/>
<dbReference type="GeneID" id="29141372"/>
<dbReference type="GeneID" id="3131460"/>
<dbReference type="KEGG" id="osa:3131460"/>
<dbReference type="GO" id="GO:0009535">
    <property type="term" value="C:chloroplast thylakoid membrane"/>
    <property type="evidence" value="ECO:0007669"/>
    <property type="project" value="UniProtKB-SubCell"/>
</dbReference>
<dbReference type="GO" id="GO:0030964">
    <property type="term" value="C:NADH dehydrogenase complex"/>
    <property type="evidence" value="ECO:0007669"/>
    <property type="project" value="TreeGrafter"/>
</dbReference>
<dbReference type="GO" id="GO:0009536">
    <property type="term" value="C:plastid"/>
    <property type="evidence" value="ECO:0000305"/>
    <property type="project" value="Gramene"/>
</dbReference>
<dbReference type="GO" id="GO:0008137">
    <property type="term" value="F:NADH dehydrogenase (ubiquinone) activity"/>
    <property type="evidence" value="ECO:0007669"/>
    <property type="project" value="InterPro"/>
</dbReference>
<dbReference type="GO" id="GO:0048038">
    <property type="term" value="F:quinone binding"/>
    <property type="evidence" value="ECO:0007669"/>
    <property type="project" value="UniProtKB-KW"/>
</dbReference>
<dbReference type="GO" id="GO:0019684">
    <property type="term" value="P:photosynthesis, light reaction"/>
    <property type="evidence" value="ECO:0007669"/>
    <property type="project" value="UniProtKB-UniRule"/>
</dbReference>
<dbReference type="FunFam" id="1.20.58.1610:FF:000001">
    <property type="entry name" value="NAD(P)H-quinone oxidoreductase subunit 3, chloroplastic"/>
    <property type="match status" value="1"/>
</dbReference>
<dbReference type="Gene3D" id="1.20.58.1610">
    <property type="entry name" value="NADH:ubiquinone/plastoquinone oxidoreductase, chain 3"/>
    <property type="match status" value="1"/>
</dbReference>
<dbReference type="HAMAP" id="MF_01394">
    <property type="entry name" value="NDH1_NuoA"/>
    <property type="match status" value="1"/>
</dbReference>
<dbReference type="InterPro" id="IPR023043">
    <property type="entry name" value="NAD(P)H_OxRDtase_bac/plastid"/>
</dbReference>
<dbReference type="InterPro" id="IPR000440">
    <property type="entry name" value="NADH_UbQ/plastoQ_OxRdtase_su3"/>
</dbReference>
<dbReference type="InterPro" id="IPR038430">
    <property type="entry name" value="NDAH_ubi_oxred_su3_sf"/>
</dbReference>
<dbReference type="PANTHER" id="PTHR11058">
    <property type="entry name" value="NADH-UBIQUINONE OXIDOREDUCTASE CHAIN 3"/>
    <property type="match status" value="1"/>
</dbReference>
<dbReference type="PANTHER" id="PTHR11058:SF9">
    <property type="entry name" value="NADH-UBIQUINONE OXIDOREDUCTASE CHAIN 3"/>
    <property type="match status" value="1"/>
</dbReference>
<dbReference type="Pfam" id="PF00507">
    <property type="entry name" value="Oxidored_q4"/>
    <property type="match status" value="1"/>
</dbReference>
<sequence length="120" mass="13900">MFLLHEYDIFWAFLIIASLIPILAFWISALLAPVREGPEKLSSYESGIEPMGGAWLQFRIRYYMFALVFVVFDVETVFLYPWAMSFDVLGISVFIEAFIFVLILVVGLVYAWRKGALEWS</sequence>
<evidence type="ECO:0000255" key="1">
    <source>
        <dbReference type="HAMAP-Rule" id="MF_01394"/>
    </source>
</evidence>